<evidence type="ECO:0000255" key="1">
    <source>
        <dbReference type="HAMAP-Rule" id="MF_01382"/>
    </source>
</evidence>
<keyword id="KW-0067">ATP-binding</keyword>
<keyword id="KW-0150">Chloroplast</keyword>
<keyword id="KW-0472">Membrane</keyword>
<keyword id="KW-0547">Nucleotide-binding</keyword>
<keyword id="KW-0934">Plastid</keyword>
<keyword id="KW-0653">Protein transport</keyword>
<keyword id="KW-0793">Thylakoid</keyword>
<keyword id="KW-1278">Translocase</keyword>
<keyword id="KW-0811">Translocation</keyword>
<keyword id="KW-0813">Transport</keyword>
<gene>
    <name evidence="1" type="primary">secA</name>
</gene>
<proteinExistence type="inferred from homology"/>
<protein>
    <recommendedName>
        <fullName evidence="1">Protein translocase subunit SecA</fullName>
        <ecNumber evidence="1">7.4.2.8</ecNumber>
    </recommendedName>
</protein>
<name>SECA_EMIHU</name>
<geneLocation type="chloroplast"/>
<accession>Q4G377</accession>
<feature type="chain" id="PRO_0000318485" description="Protein translocase subunit SecA">
    <location>
        <begin position="1"/>
        <end position="881"/>
    </location>
</feature>
<feature type="binding site" evidence="1">
    <location>
        <position position="83"/>
    </location>
    <ligand>
        <name>ATP</name>
        <dbReference type="ChEBI" id="CHEBI:30616"/>
    </ligand>
</feature>
<feature type="binding site" evidence="1">
    <location>
        <begin position="101"/>
        <end position="105"/>
    </location>
    <ligand>
        <name>ATP</name>
        <dbReference type="ChEBI" id="CHEBI:30616"/>
    </ligand>
</feature>
<feature type="binding site" evidence="1">
    <location>
        <position position="492"/>
    </location>
    <ligand>
        <name>ATP</name>
        <dbReference type="ChEBI" id="CHEBI:30616"/>
    </ligand>
</feature>
<dbReference type="EC" id="7.4.2.8" evidence="1"/>
<dbReference type="EMBL" id="AY741371">
    <property type="protein sequence ID" value="AAX13889.1"/>
    <property type="molecule type" value="Genomic_DNA"/>
</dbReference>
<dbReference type="RefSeq" id="YP_277390.1">
    <property type="nucleotide sequence ID" value="NC_007288.1"/>
</dbReference>
<dbReference type="SMR" id="Q4G377"/>
<dbReference type="STRING" id="2903.Q4G377"/>
<dbReference type="GeneID" id="3562474"/>
<dbReference type="GO" id="GO:0009570">
    <property type="term" value="C:chloroplast stroma"/>
    <property type="evidence" value="ECO:0007669"/>
    <property type="project" value="UniProtKB-SubCell"/>
</dbReference>
<dbReference type="GO" id="GO:0009535">
    <property type="term" value="C:chloroplast thylakoid membrane"/>
    <property type="evidence" value="ECO:0007669"/>
    <property type="project" value="UniProtKB-SubCell"/>
</dbReference>
<dbReference type="GO" id="GO:0005524">
    <property type="term" value="F:ATP binding"/>
    <property type="evidence" value="ECO:0007669"/>
    <property type="project" value="UniProtKB-UniRule"/>
</dbReference>
<dbReference type="GO" id="GO:0008564">
    <property type="term" value="F:protein-exporting ATPase activity"/>
    <property type="evidence" value="ECO:0007669"/>
    <property type="project" value="UniProtKB-EC"/>
</dbReference>
<dbReference type="GO" id="GO:0065002">
    <property type="term" value="P:intracellular protein transmembrane transport"/>
    <property type="evidence" value="ECO:0007669"/>
    <property type="project" value="UniProtKB-UniRule"/>
</dbReference>
<dbReference type="GO" id="GO:0017038">
    <property type="term" value="P:protein import"/>
    <property type="evidence" value="ECO:0007669"/>
    <property type="project" value="InterPro"/>
</dbReference>
<dbReference type="GO" id="GO:0006605">
    <property type="term" value="P:protein targeting"/>
    <property type="evidence" value="ECO:0007669"/>
    <property type="project" value="UniProtKB-UniRule"/>
</dbReference>
<dbReference type="CDD" id="cd17928">
    <property type="entry name" value="DEXDc_SecA"/>
    <property type="match status" value="1"/>
</dbReference>
<dbReference type="CDD" id="cd18803">
    <property type="entry name" value="SF2_C_secA"/>
    <property type="match status" value="1"/>
</dbReference>
<dbReference type="FunFam" id="3.90.1440.10:FF:000003">
    <property type="entry name" value="Preprotein translocase SecA subunit"/>
    <property type="match status" value="1"/>
</dbReference>
<dbReference type="Gene3D" id="1.10.3060.10">
    <property type="entry name" value="Helical scaffold and wing domains of SecA"/>
    <property type="match status" value="1"/>
</dbReference>
<dbReference type="Gene3D" id="3.40.50.300">
    <property type="entry name" value="P-loop containing nucleotide triphosphate hydrolases"/>
    <property type="match status" value="2"/>
</dbReference>
<dbReference type="Gene3D" id="3.90.1440.10">
    <property type="entry name" value="SecA, preprotein cross-linking domain"/>
    <property type="match status" value="1"/>
</dbReference>
<dbReference type="HAMAP" id="MF_01382">
    <property type="entry name" value="SecA"/>
    <property type="match status" value="1"/>
</dbReference>
<dbReference type="InterPro" id="IPR014001">
    <property type="entry name" value="Helicase_ATP-bd"/>
</dbReference>
<dbReference type="InterPro" id="IPR027417">
    <property type="entry name" value="P-loop_NTPase"/>
</dbReference>
<dbReference type="InterPro" id="IPR000185">
    <property type="entry name" value="SecA"/>
</dbReference>
<dbReference type="InterPro" id="IPR020937">
    <property type="entry name" value="SecA_CS"/>
</dbReference>
<dbReference type="InterPro" id="IPR011115">
    <property type="entry name" value="SecA_DEAD"/>
</dbReference>
<dbReference type="InterPro" id="IPR014018">
    <property type="entry name" value="SecA_motor_DEAD"/>
</dbReference>
<dbReference type="InterPro" id="IPR011130">
    <property type="entry name" value="SecA_preprotein_X-link_dom"/>
</dbReference>
<dbReference type="InterPro" id="IPR044722">
    <property type="entry name" value="SecA_SF2_C"/>
</dbReference>
<dbReference type="InterPro" id="IPR011116">
    <property type="entry name" value="SecA_Wing/Scaffold"/>
</dbReference>
<dbReference type="InterPro" id="IPR036266">
    <property type="entry name" value="SecA_Wing/Scaffold_sf"/>
</dbReference>
<dbReference type="InterPro" id="IPR036670">
    <property type="entry name" value="SecA_X-link_sf"/>
</dbReference>
<dbReference type="NCBIfam" id="NF009538">
    <property type="entry name" value="PRK12904.1"/>
    <property type="match status" value="1"/>
</dbReference>
<dbReference type="NCBIfam" id="TIGR00963">
    <property type="entry name" value="secA"/>
    <property type="match status" value="1"/>
</dbReference>
<dbReference type="PANTHER" id="PTHR30612:SF0">
    <property type="entry name" value="CHLOROPLAST PROTEIN-TRANSPORTING ATPASE"/>
    <property type="match status" value="1"/>
</dbReference>
<dbReference type="PANTHER" id="PTHR30612">
    <property type="entry name" value="SECA INNER MEMBRANE COMPONENT OF SEC PROTEIN SECRETION SYSTEM"/>
    <property type="match status" value="1"/>
</dbReference>
<dbReference type="Pfam" id="PF21090">
    <property type="entry name" value="P-loop_SecA"/>
    <property type="match status" value="1"/>
</dbReference>
<dbReference type="Pfam" id="PF07517">
    <property type="entry name" value="SecA_DEAD"/>
    <property type="match status" value="1"/>
</dbReference>
<dbReference type="Pfam" id="PF01043">
    <property type="entry name" value="SecA_PP_bind"/>
    <property type="match status" value="1"/>
</dbReference>
<dbReference type="Pfam" id="PF07516">
    <property type="entry name" value="SecA_SW"/>
    <property type="match status" value="1"/>
</dbReference>
<dbReference type="PRINTS" id="PR00906">
    <property type="entry name" value="SECA"/>
</dbReference>
<dbReference type="SMART" id="SM00957">
    <property type="entry name" value="SecA_DEAD"/>
    <property type="match status" value="1"/>
</dbReference>
<dbReference type="SMART" id="SM00958">
    <property type="entry name" value="SecA_PP_bind"/>
    <property type="match status" value="1"/>
</dbReference>
<dbReference type="SUPFAM" id="SSF81886">
    <property type="entry name" value="Helical scaffold and wing domains of SecA"/>
    <property type="match status" value="1"/>
</dbReference>
<dbReference type="SUPFAM" id="SSF52540">
    <property type="entry name" value="P-loop containing nucleoside triphosphate hydrolases"/>
    <property type="match status" value="2"/>
</dbReference>
<dbReference type="SUPFAM" id="SSF81767">
    <property type="entry name" value="Pre-protein crosslinking domain of SecA"/>
    <property type="match status" value="1"/>
</dbReference>
<dbReference type="PROSITE" id="PS01312">
    <property type="entry name" value="SECA"/>
    <property type="match status" value="1"/>
</dbReference>
<dbReference type="PROSITE" id="PS51196">
    <property type="entry name" value="SECA_MOTOR_DEAD"/>
    <property type="match status" value="1"/>
</dbReference>
<comment type="function">
    <text evidence="1">Has a central role in coupling the hydrolysis of ATP to the transfer of proteins across the thylakoid membrane.</text>
</comment>
<comment type="catalytic activity">
    <reaction evidence="1">
        <text>ATP + H2O + cellular proteinSide 1 = ADP + phosphate + cellular proteinSide 2.</text>
        <dbReference type="EC" id="7.4.2.8"/>
    </reaction>
</comment>
<comment type="subcellular location">
    <subcellularLocation>
        <location evidence="1">Plastid</location>
        <location evidence="1">Chloroplast stroma</location>
    </subcellularLocation>
    <subcellularLocation>
        <location evidence="1">Plastid</location>
        <location evidence="1">Chloroplast thylakoid membrane</location>
        <topology evidence="1">Peripheral membrane protein</topology>
    </subcellularLocation>
    <text evidence="1">A minor fraction is associated with the chloroplast thylakoid membrane.</text>
</comment>
<comment type="similarity">
    <text evidence="1">Belongs to the SecA family.</text>
</comment>
<reference key="1">
    <citation type="journal article" date="2005" name="DNA Res.">
        <title>The complete plastid genome sequence of the haptophyte Emiliania huxleyi: a comparison to other plastid genomes.</title>
        <authorList>
            <person name="Sanchez-Puerta M.V."/>
            <person name="Bachvaroff T.R."/>
            <person name="Delwiche C.F."/>
        </authorList>
    </citation>
    <scope>NUCLEOTIDE SEQUENCE [LARGE SCALE GENOMIC DNA]</scope>
    <source>
        <strain>CCMP373 / CSIRO-CS-57 / BT6</strain>
    </source>
</reference>
<sequence>MLEPFFKNYFNQSLTKYNSQVDAINNFGPMLSNLSDDEIRQRVQILKQQLLSNKNEADIICEVFAIVREATFRTLDIKHFDVQLIGGLVLNDGQIAEMKTGEGKTIVALLPTFLNALYGKGVHVVTVNDYLARRDAETVGRVHRFLGLTVGLIQEDMSPEERKQNYQCDVVYVTNNELGFDYLRDNMAFTQEEVVQRPLFYCVVDEVDSILIDEARTPLIISGPSEAPTQKYLQTSQLARVLQKNIHYIIDEKNQVVKLTDEGTLFCEQALKIADLYSPSDPWISYVLNSIKAKELFIRNTHYIVNVEEEVIIVDEFTGRTMAGRRWSDGLHQAIESKENLPIQDESQTLASITYQNLFLLYDKLSGMTGTAKTEELEFEKIYGLKVIPIPTHRDVKRKDFPDLVYKNQYLKWQAIANECIKMNEIDRPVLIGTTTIEKSELLAALLSEYNVPYRLLNARPENIESEAEIVSQAGCRGAITISTNMAGRGTDIALGGNLESLLKVKLKKFISDLVSADFSTVLKSAQFDEFLVSFVPVFETFGLSKLNESSVREDLLEYLNEGIIPDRSDITDFITAYNSFLKERAAILLEEKTLITKLGGLHVIGTERHESRRIDNQLRGRSGRQGDPGSSRFFLSLDDKLLRLFGGDQILNLLQNIGLEDDAPIQSPILTKSLESAQKKVEVYYFDSRKQLFEYDQALTMQRNGIYSERKRVLEKESLRDWIIEYGERSLYDITLAFSTNTNLALDKFFALKTQELLGMPYQVKWESAKGDINVLLNNLKHQFQVSYTLKEAQLEAIEPGIMRELERSFLLQQIDFSWKEHLQKISALRDSIRWRSYGQRDPLTDYKKESYSTFVTMLNRIRHQVIYFIFRSKITIDFE</sequence>
<organism>
    <name type="scientific">Emiliania huxleyi</name>
    <name type="common">Coccolithophore</name>
    <name type="synonym">Pontosphaera huxleyi</name>
    <dbReference type="NCBI Taxonomy" id="2903"/>
    <lineage>
        <taxon>Eukaryota</taxon>
        <taxon>Haptista</taxon>
        <taxon>Haptophyta</taxon>
        <taxon>Prymnesiophyceae</taxon>
        <taxon>Isochrysidales</taxon>
        <taxon>Noelaerhabdaceae</taxon>
        <taxon>Emiliania</taxon>
    </lineage>
</organism>